<comment type="function">
    <text>Unknown. Probably does not have RuBisCO activity.</text>
</comment>
<comment type="miscellaneous">
    <text>Only found in Symbiodinium A, a minor symbiont of the giant clam Tridacna gigas.</text>
</comment>
<comment type="similarity">
    <text evidence="1">Belongs to the RuBisCO large chain family. Type IV subfamily.</text>
</comment>
<feature type="chain" id="PRO_0000062685" description="Uncharacterized ribulose bisphosphate carboxylase-like protein">
    <location>
        <begin position="1" status="less than"/>
        <end position="537"/>
    </location>
</feature>
<feature type="non-terminal residue">
    <location>
        <position position="1"/>
    </location>
</feature>
<organism>
    <name type="scientific">Symbiodinium sp.</name>
    <name type="common">Dinoflagellate</name>
    <dbReference type="NCBI Taxonomy" id="2950"/>
    <lineage>
        <taxon>Eukaryota</taxon>
        <taxon>Sar</taxon>
        <taxon>Alveolata</taxon>
        <taxon>Dinophyceae</taxon>
        <taxon>Suessiales</taxon>
        <taxon>Symbiodiniaceae</taxon>
        <taxon>Symbiodinium</taxon>
    </lineage>
</organism>
<evidence type="ECO:0000305" key="1"/>
<dbReference type="EMBL" id="U43533">
    <property type="protein sequence ID" value="AAB17551.1"/>
    <property type="molecule type" value="Genomic_DNA"/>
</dbReference>
<dbReference type="SMR" id="Q41407"/>
<dbReference type="GO" id="GO:0000287">
    <property type="term" value="F:magnesium ion binding"/>
    <property type="evidence" value="ECO:0007669"/>
    <property type="project" value="InterPro"/>
</dbReference>
<dbReference type="GO" id="GO:0016984">
    <property type="term" value="F:ribulose-bisphosphate carboxylase activity"/>
    <property type="evidence" value="ECO:0007669"/>
    <property type="project" value="InterPro"/>
</dbReference>
<dbReference type="GO" id="GO:0015977">
    <property type="term" value="P:carbon fixation"/>
    <property type="evidence" value="ECO:0007669"/>
    <property type="project" value="InterPro"/>
</dbReference>
<dbReference type="CDD" id="cd08211">
    <property type="entry name" value="RuBisCO_large_II"/>
    <property type="match status" value="1"/>
</dbReference>
<dbReference type="Gene3D" id="3.20.20.110">
    <property type="entry name" value="Ribulose bisphosphate carboxylase, large subunit, C-terminal domain"/>
    <property type="match status" value="1"/>
</dbReference>
<dbReference type="Gene3D" id="3.30.70.150">
    <property type="entry name" value="RuBisCO large subunit, N-terminal domain"/>
    <property type="match status" value="1"/>
</dbReference>
<dbReference type="InterPro" id="IPR033966">
    <property type="entry name" value="RuBisCO"/>
</dbReference>
<dbReference type="InterPro" id="IPR000685">
    <property type="entry name" value="RuBisCO_lsu_C"/>
</dbReference>
<dbReference type="InterPro" id="IPR036376">
    <property type="entry name" value="RuBisCO_lsu_C_sf"/>
</dbReference>
<dbReference type="InterPro" id="IPR017443">
    <property type="entry name" value="RuBisCO_lsu_fd_N"/>
</dbReference>
<dbReference type="InterPro" id="IPR036422">
    <property type="entry name" value="RuBisCO_lsu_N_sf"/>
</dbReference>
<dbReference type="InterPro" id="IPR020871">
    <property type="entry name" value="RuBisCO_lsuII"/>
</dbReference>
<dbReference type="PANTHER" id="PTHR42704">
    <property type="entry name" value="RIBULOSE BISPHOSPHATE CARBOXYLASE"/>
    <property type="match status" value="1"/>
</dbReference>
<dbReference type="PANTHER" id="PTHR42704:SF17">
    <property type="entry name" value="RIBULOSE BISPHOSPHATE CARBOXYLASE LARGE CHAIN"/>
    <property type="match status" value="1"/>
</dbReference>
<dbReference type="Pfam" id="PF00016">
    <property type="entry name" value="RuBisCO_large"/>
    <property type="match status" value="1"/>
</dbReference>
<dbReference type="Pfam" id="PF02788">
    <property type="entry name" value="RuBisCO_large_N"/>
    <property type="match status" value="1"/>
</dbReference>
<dbReference type="SUPFAM" id="SSF51649">
    <property type="entry name" value="RuBisCo, C-terminal domain"/>
    <property type="match status" value="1"/>
</dbReference>
<dbReference type="SUPFAM" id="SSF54966">
    <property type="entry name" value="RuBisCO, large subunit, small (N-terminal) domain"/>
    <property type="match status" value="1"/>
</dbReference>
<gene>
    <name type="primary">rbcG</name>
</gene>
<name>RBLL_SYMSP</name>
<protein>
    <recommendedName>
        <fullName>Uncharacterized ribulose bisphosphate carboxylase-like protein</fullName>
        <shortName>RuBisCO-like protein</shortName>
    </recommendedName>
</protein>
<reference key="1">
    <citation type="journal article" date="1996" name="Plant Cell">
        <title>Rubisco in marine symbiotic dinoflagellates: form II enzymes in eukaryotic oxygenic phototrophs encoded by a nuclear multigene family.</title>
        <authorList>
            <person name="Rowan R."/>
            <person name="Whitney S.M."/>
            <person name="Fowler A."/>
            <person name="Yellowlees D."/>
        </authorList>
    </citation>
    <scope>NUCLEOTIDE SEQUENCE [GENOMIC DNA]</scope>
</reference>
<proteinExistence type="inferred from homology"/>
<accession>Q41407</accession>
<sequence length="537" mass="57423">LEQSSRYADLTLDEAGSLRNGEHVLVAYIMKPKMGYDYLATAAHFAAESCTGARSTDDAKESANAVVYYIDADSQEMRIAYPTVLFDSNLTDGRDMVRSFLTLAIGNTQGMEDVEFGKIYDFYLPPSFLRLQESPSVNTMWRILDKGASNGGLAAGAMKPKLGMQPKPFRAASYALWQGGAYTTADVQANQAPTQASEGIPEVVKAMRSCVQGTDVAKRHSGGNYTDEPKEMDARGKYVLSQFGPFSGNCVSLVAGYAAGGSARHTFPRQFVHYHRAGQASTSSPQTQRGYSAFVHTKISQVISTTSIHADTMSFGKTQGDSPDKSIAVMLQDDAADARLCNQEWEGMRQNAPIISGSMNALRLPAFFETLGNSNVILTADSGSFGHKDGPASGAIACRQVEEAWKAWRSGQYGNVSLSDGVVEFAKTHEEIKGAFLTFPKDADEIYPGWKEKLGCTAEASVPPASFVNAKISTASSAAVATARTTMNAAKMASQSTAGSAVNPYTGGLKSIHPASSSNTARTVLLSRQGREAALQD</sequence>